<reference key="1">
    <citation type="journal article" date="2005" name="DNA Cell Biol.">
        <title>Identification, expression pattern, and subcellular location of human RIP isoforms.</title>
        <authorList>
            <person name="Chen J.-Z."/>
            <person name="Huang S.-D."/>
            <person name="Ji C.-N."/>
            <person name="Pang R.-Y."/>
            <person name="Xie Y."/>
            <person name="Xue J.-L."/>
        </authorList>
    </citation>
    <scope>NUCLEOTIDE SEQUENCE [MRNA] (ISOFORMS 1; 2; 3; 4; 5; 6 AND 7)</scope>
    <scope>SUBCELLULAR LOCATION</scope>
    <scope>TISSUE SPECIFICITY</scope>
    <scope>VARIANT LYS-103</scope>
</reference>
<reference key="2">
    <citation type="journal article" date="2005" name="Mol. Cell. Biol.">
        <title>Sumoylation of the novel protein hRIPbeta is involved in replication protein A deposition in PML nuclear bodies.</title>
        <authorList>
            <person name="Park J."/>
            <person name="Seo T."/>
            <person name="Kim H."/>
            <person name="Choe J."/>
        </authorList>
    </citation>
    <scope>NUCLEOTIDE SEQUENCE [MRNA] (ISOFORMS 1; 2; 4; 5; 6 AND 7)</scope>
    <scope>FUNCTION</scope>
    <scope>SUBCELLULAR LOCATION</scope>
    <scope>SUMOYLATION AT LYS-121</scope>
    <scope>INTERACTION WITH RPA1</scope>
    <scope>MUTAGENESIS OF LYS-114; LYS-121 AND LYS-142</scope>
    <scope>VARIANT LYS-103</scope>
</reference>
<reference key="3">
    <citation type="journal article" date="2004" name="Nat. Genet.">
        <title>Complete sequencing and characterization of 21,243 full-length human cDNAs.</title>
        <authorList>
            <person name="Ota T."/>
            <person name="Suzuki Y."/>
            <person name="Nishikawa T."/>
            <person name="Otsuki T."/>
            <person name="Sugiyama T."/>
            <person name="Irie R."/>
            <person name="Wakamatsu A."/>
            <person name="Hayashi K."/>
            <person name="Sato H."/>
            <person name="Nagai K."/>
            <person name="Kimura K."/>
            <person name="Makita H."/>
            <person name="Sekine M."/>
            <person name="Obayashi M."/>
            <person name="Nishi T."/>
            <person name="Shibahara T."/>
            <person name="Tanaka T."/>
            <person name="Ishii S."/>
            <person name="Yamamoto J."/>
            <person name="Saito K."/>
            <person name="Kawai Y."/>
            <person name="Isono Y."/>
            <person name="Nakamura Y."/>
            <person name="Nagahari K."/>
            <person name="Murakami K."/>
            <person name="Yasuda T."/>
            <person name="Iwayanagi T."/>
            <person name="Wagatsuma M."/>
            <person name="Shiratori A."/>
            <person name="Sudo H."/>
            <person name="Hosoiri T."/>
            <person name="Kaku Y."/>
            <person name="Kodaira H."/>
            <person name="Kondo H."/>
            <person name="Sugawara M."/>
            <person name="Takahashi M."/>
            <person name="Kanda K."/>
            <person name="Yokoi T."/>
            <person name="Furuya T."/>
            <person name="Kikkawa E."/>
            <person name="Omura Y."/>
            <person name="Abe K."/>
            <person name="Kamihara K."/>
            <person name="Katsuta N."/>
            <person name="Sato K."/>
            <person name="Tanikawa M."/>
            <person name="Yamazaki M."/>
            <person name="Ninomiya K."/>
            <person name="Ishibashi T."/>
            <person name="Yamashita H."/>
            <person name="Murakawa K."/>
            <person name="Fujimori K."/>
            <person name="Tanai H."/>
            <person name="Kimata M."/>
            <person name="Watanabe M."/>
            <person name="Hiraoka S."/>
            <person name="Chiba Y."/>
            <person name="Ishida S."/>
            <person name="Ono Y."/>
            <person name="Takiguchi S."/>
            <person name="Watanabe S."/>
            <person name="Yosida M."/>
            <person name="Hotuta T."/>
            <person name="Kusano J."/>
            <person name="Kanehori K."/>
            <person name="Takahashi-Fujii A."/>
            <person name="Hara H."/>
            <person name="Tanase T.-O."/>
            <person name="Nomura Y."/>
            <person name="Togiya S."/>
            <person name="Komai F."/>
            <person name="Hara R."/>
            <person name="Takeuchi K."/>
            <person name="Arita M."/>
            <person name="Imose N."/>
            <person name="Musashino K."/>
            <person name="Yuuki H."/>
            <person name="Oshima A."/>
            <person name="Sasaki N."/>
            <person name="Aotsuka S."/>
            <person name="Yoshikawa Y."/>
            <person name="Matsunawa H."/>
            <person name="Ichihara T."/>
            <person name="Shiohata N."/>
            <person name="Sano S."/>
            <person name="Moriya S."/>
            <person name="Momiyama H."/>
            <person name="Satoh N."/>
            <person name="Takami S."/>
            <person name="Terashima Y."/>
            <person name="Suzuki O."/>
            <person name="Nakagawa S."/>
            <person name="Senoh A."/>
            <person name="Mizoguchi H."/>
            <person name="Goto Y."/>
            <person name="Shimizu F."/>
            <person name="Wakebe H."/>
            <person name="Hishigaki H."/>
            <person name="Watanabe T."/>
            <person name="Sugiyama A."/>
            <person name="Takemoto M."/>
            <person name="Kawakami B."/>
            <person name="Yamazaki M."/>
            <person name="Watanabe K."/>
            <person name="Kumagai A."/>
            <person name="Itakura S."/>
            <person name="Fukuzumi Y."/>
            <person name="Fujimori Y."/>
            <person name="Komiyama M."/>
            <person name="Tashiro H."/>
            <person name="Tanigami A."/>
            <person name="Fujiwara T."/>
            <person name="Ono T."/>
            <person name="Yamada K."/>
            <person name="Fujii Y."/>
            <person name="Ozaki K."/>
            <person name="Hirao M."/>
            <person name="Ohmori Y."/>
            <person name="Kawabata A."/>
            <person name="Hikiji T."/>
            <person name="Kobatake N."/>
            <person name="Inagaki H."/>
            <person name="Ikema Y."/>
            <person name="Okamoto S."/>
            <person name="Okitani R."/>
            <person name="Kawakami T."/>
            <person name="Noguchi S."/>
            <person name="Itoh T."/>
            <person name="Shigeta K."/>
            <person name="Senba T."/>
            <person name="Matsumura K."/>
            <person name="Nakajima Y."/>
            <person name="Mizuno T."/>
            <person name="Morinaga M."/>
            <person name="Sasaki M."/>
            <person name="Togashi T."/>
            <person name="Oyama M."/>
            <person name="Hata H."/>
            <person name="Watanabe M."/>
            <person name="Komatsu T."/>
            <person name="Mizushima-Sugano J."/>
            <person name="Satoh T."/>
            <person name="Shirai Y."/>
            <person name="Takahashi Y."/>
            <person name="Nakagawa K."/>
            <person name="Okumura K."/>
            <person name="Nagase T."/>
            <person name="Nomura N."/>
            <person name="Kikuchi H."/>
            <person name="Masuho Y."/>
            <person name="Yamashita R."/>
            <person name="Nakai K."/>
            <person name="Yada T."/>
            <person name="Nakamura Y."/>
            <person name="Ohara O."/>
            <person name="Isogai T."/>
            <person name="Sugano S."/>
        </authorList>
    </citation>
    <scope>NUCLEOTIDE SEQUENCE [LARGE SCALE MRNA] (ISOFORMS 3 AND 8)</scope>
    <scope>VARIANT LYS-103</scope>
    <source>
        <tissue>Corpus callosum</tissue>
        <tissue>Placenta</tissue>
    </source>
</reference>
<reference key="4">
    <citation type="submission" date="2005-09" db="EMBL/GenBank/DDBJ databases">
        <authorList>
            <person name="Mural R.J."/>
            <person name="Istrail S."/>
            <person name="Sutton G."/>
            <person name="Florea L."/>
            <person name="Halpern A.L."/>
            <person name="Mobarry C.M."/>
            <person name="Lippert R."/>
            <person name="Walenz B."/>
            <person name="Shatkay H."/>
            <person name="Dew I."/>
            <person name="Miller J.R."/>
            <person name="Flanigan M.J."/>
            <person name="Edwards N.J."/>
            <person name="Bolanos R."/>
            <person name="Fasulo D."/>
            <person name="Halldorsson B.V."/>
            <person name="Hannenhalli S."/>
            <person name="Turner R."/>
            <person name="Yooseph S."/>
            <person name="Lu F."/>
            <person name="Nusskern D.R."/>
            <person name="Shue B.C."/>
            <person name="Zheng X.H."/>
            <person name="Zhong F."/>
            <person name="Delcher A.L."/>
            <person name="Huson D.H."/>
            <person name="Kravitz S.A."/>
            <person name="Mouchard L."/>
            <person name="Reinert K."/>
            <person name="Remington K.A."/>
            <person name="Clark A.G."/>
            <person name="Waterman M.S."/>
            <person name="Eichler E.E."/>
            <person name="Adams M.D."/>
            <person name="Hunkapiller M.W."/>
            <person name="Myers E.W."/>
            <person name="Venter J.C."/>
        </authorList>
    </citation>
    <scope>NUCLEOTIDE SEQUENCE [LARGE SCALE GENOMIC DNA]</scope>
</reference>
<reference key="5">
    <citation type="journal article" date="2006" name="Nature">
        <title>DNA sequence of human chromosome 17 and analysis of rearrangement in the human lineage.</title>
        <authorList>
            <person name="Zody M.C."/>
            <person name="Garber M."/>
            <person name="Adams D.J."/>
            <person name="Sharpe T."/>
            <person name="Harrow J."/>
            <person name="Lupski J.R."/>
            <person name="Nicholson C."/>
            <person name="Searle S.M."/>
            <person name="Wilming L."/>
            <person name="Young S.K."/>
            <person name="Abouelleil A."/>
            <person name="Allen N.R."/>
            <person name="Bi W."/>
            <person name="Bloom T."/>
            <person name="Borowsky M.L."/>
            <person name="Bugalter B.E."/>
            <person name="Butler J."/>
            <person name="Chang J.L."/>
            <person name="Chen C.-K."/>
            <person name="Cook A."/>
            <person name="Corum B."/>
            <person name="Cuomo C.A."/>
            <person name="de Jong P.J."/>
            <person name="DeCaprio D."/>
            <person name="Dewar K."/>
            <person name="FitzGerald M."/>
            <person name="Gilbert J."/>
            <person name="Gibson R."/>
            <person name="Gnerre S."/>
            <person name="Goldstein S."/>
            <person name="Grafham D.V."/>
            <person name="Grocock R."/>
            <person name="Hafez N."/>
            <person name="Hagopian D.S."/>
            <person name="Hart E."/>
            <person name="Norman C.H."/>
            <person name="Humphray S."/>
            <person name="Jaffe D.B."/>
            <person name="Jones M."/>
            <person name="Kamal M."/>
            <person name="Khodiyar V.K."/>
            <person name="LaButti K."/>
            <person name="Laird G."/>
            <person name="Lehoczky J."/>
            <person name="Liu X."/>
            <person name="Lokyitsang T."/>
            <person name="Loveland J."/>
            <person name="Lui A."/>
            <person name="Macdonald P."/>
            <person name="Major J.E."/>
            <person name="Matthews L."/>
            <person name="Mauceli E."/>
            <person name="McCarroll S.A."/>
            <person name="Mihalev A.H."/>
            <person name="Mudge J."/>
            <person name="Nguyen C."/>
            <person name="Nicol R."/>
            <person name="O'Leary S.B."/>
            <person name="Osoegawa K."/>
            <person name="Schwartz D.C."/>
            <person name="Shaw-Smith C."/>
            <person name="Stankiewicz P."/>
            <person name="Steward C."/>
            <person name="Swarbreck D."/>
            <person name="Venkataraman V."/>
            <person name="Whittaker C.A."/>
            <person name="Yang X."/>
            <person name="Zimmer A.R."/>
            <person name="Bradley A."/>
            <person name="Hubbard T."/>
            <person name="Birren B.W."/>
            <person name="Rogers J."/>
            <person name="Lander E.S."/>
            <person name="Nusbaum C."/>
        </authorList>
    </citation>
    <scope>NUCLEOTIDE SEQUENCE [LARGE SCALE GENOMIC DNA]</scope>
</reference>
<reference key="6">
    <citation type="journal article" date="2004" name="Genome Res.">
        <title>The status, quality, and expansion of the NIH full-length cDNA project: the Mammalian Gene Collection (MGC).</title>
        <authorList>
            <consortium name="The MGC Project Team"/>
        </authorList>
    </citation>
    <scope>NUCLEOTIDE SEQUENCE [LARGE SCALE MRNA] (ISOFORMS 1; 4 AND 6)</scope>
    <scope>VARIANT LYS-103</scope>
    <source>
        <tissue>Eye</tissue>
    </source>
</reference>
<reference key="7">
    <citation type="journal article" date="2009" name="Anal. Chem.">
        <title>Lys-N and trypsin cover complementary parts of the phosphoproteome in a refined SCX-based approach.</title>
        <authorList>
            <person name="Gauci S."/>
            <person name="Helbig A.O."/>
            <person name="Slijper M."/>
            <person name="Krijgsveld J."/>
            <person name="Heck A.J."/>
            <person name="Mohammed S."/>
        </authorList>
    </citation>
    <scope>IDENTIFICATION BY MASS SPECTROMETRY [LARGE SCALE ANALYSIS]</scope>
</reference>
<reference key="8">
    <citation type="journal article" date="2013" name="J. Proteome Res.">
        <title>Toward a comprehensive characterization of a human cancer cell phosphoproteome.</title>
        <authorList>
            <person name="Zhou H."/>
            <person name="Di Palma S."/>
            <person name="Preisinger C."/>
            <person name="Peng M."/>
            <person name="Polat A.N."/>
            <person name="Heck A.J."/>
            <person name="Mohammed S."/>
        </authorList>
    </citation>
    <scope>PHOSPHORYLATION [LARGE SCALE ANALYSIS] AT SER-18</scope>
    <scope>IDENTIFICATION BY MASS SPECTROMETRY [LARGE SCALE ANALYSIS]</scope>
    <source>
        <tissue>Erythroleukemia</tissue>
    </source>
</reference>
<keyword id="KW-0025">Alternative splicing</keyword>
<keyword id="KW-0963">Cytoplasm</keyword>
<keyword id="KW-1017">Isopeptide bond</keyword>
<keyword id="KW-0479">Metal-binding</keyword>
<keyword id="KW-0539">Nucleus</keyword>
<keyword id="KW-0597">Phosphoprotein</keyword>
<keyword id="KW-1267">Proteomics identification</keyword>
<keyword id="KW-1185">Reference proteome</keyword>
<keyword id="KW-0832">Ubl conjugation</keyword>
<keyword id="KW-0862">Zinc</keyword>
<keyword id="KW-0863">Zinc-finger</keyword>
<proteinExistence type="evidence at protein level"/>
<protein>
    <recommendedName>
        <fullName>RPA-interacting protein</fullName>
        <shortName>hRIP</shortName>
    </recommendedName>
</protein>
<comment type="function">
    <text evidence="4">Mediates the import of RPA complex into the nucleus, possibly via some interaction with importin beta. Isoform 2 is sumoylated and mediates the localization of RPA complex into the PML body of the nucleus, thereby participating in RPA function in DNA metabolism.</text>
</comment>
<comment type="subunit">
    <text evidence="4">Interacts with the RPA1 subunit of RPA complex.</text>
</comment>
<comment type="interaction">
    <interactant intactId="EBI-3907663">
        <id>Q86UA6</id>
    </interactant>
    <interactant intactId="EBI-2824089">
        <id>O15315</id>
        <label>RAD51B</label>
    </interactant>
    <organismsDiffer>false</organismsDiffer>
    <experiments>3</experiments>
</comment>
<comment type="subcellular location">
    <molecule>Isoform 1</molecule>
    <subcellularLocation>
        <location>Cytoplasm</location>
    </subcellularLocation>
    <subcellularLocation>
        <location>Nucleus</location>
    </subcellularLocation>
</comment>
<comment type="subcellular location">
    <molecule>Isoform 2</molecule>
    <subcellularLocation>
        <location>Nucleus</location>
        <location>PML body</location>
    </subcellularLocation>
</comment>
<comment type="alternative products">
    <event type="alternative splicing"/>
    <isoform>
        <id>Q86UA6-1</id>
        <name>1</name>
        <name>Alpha</name>
        <name>hRIPalpha</name>
        <sequence type="displayed"/>
    </isoform>
    <isoform>
        <id>Q86UA6-2</id>
        <name>2</name>
        <name>Beta</name>
        <name>hRIPbeta</name>
        <sequence type="described" ref="VSP_016410"/>
    </isoform>
    <isoform>
        <id>Q86UA6-3</id>
        <name>3</name>
        <name>Gamma2</name>
        <sequence type="described" ref="VSP_016408"/>
    </isoform>
    <isoform>
        <id>Q86UA6-4</id>
        <name>4</name>
        <name>Gamma1</name>
        <sequence type="described" ref="VSP_016407 VSP_016409"/>
    </isoform>
    <isoform>
        <id>Q86UA6-5</id>
        <name>5</name>
        <name>Delta2</name>
        <sequence type="described" ref="VSP_016403 VSP_016405"/>
    </isoform>
    <isoform>
        <id>Q86UA6-6</id>
        <name>6</name>
        <name>Delta3</name>
        <sequence type="described" ref="VSP_016404 VSP_016405"/>
    </isoform>
    <isoform>
        <id>Q86UA6-7</id>
        <name>7</name>
        <name>Delta1</name>
        <name>Delta 4</name>
        <sequence type="described" ref="VSP_016402 VSP_016406"/>
    </isoform>
    <isoform>
        <id>Q86UA6-8</id>
        <name>8</name>
        <sequence type="described" ref="VSP_045356"/>
    </isoform>
    <isoform>
        <id>Q86UA6-9</id>
        <name>9</name>
        <sequence type="described" ref="VSP_046795"/>
    </isoform>
</comment>
<comment type="tissue specificity">
    <text evidence="3">Widely expressed. Expressed in pancreas, kidney, muscle, liver, lung, placenta, brain, heart, leukocytes, colon, intestine, ovary, testis, prostate, thymus and spleen.</text>
</comment>
<comment type="PTM">
    <molecule>Isoform 2</molecule>
    <text evidence="4">Sumoylated. Sumoylation is required for localization in the nuclear PML body and transport of RPA complex in PML body. Upon UV irradiation and during S phase, it is desumoylated, releasing RPA complex that is translocated to sites of DNA damage. Sumoylation takes place at different Lys residues. Variant 'Lys-103' adds a sumoylation site and increases total sumoylation levels.</text>
</comment>
<comment type="miscellaneous">
    <molecule>Isoform 1</molecule>
    <text>Major isoform with isoform 2.</text>
</comment>
<comment type="miscellaneous">
    <molecule>Isoform 2</molecule>
    <text evidence="9">Major isoform with isoform 1.</text>
</comment>
<comment type="miscellaneous">
    <molecule>Isoform 3</molecule>
    <text evidence="9">May be produced at very low levels due to a premature stop codon in the mRNA, leading to nonsense-mediated mRNA decay. May be due to an intron retention.</text>
</comment>
<comment type="miscellaneous">
    <molecule>Isoform 4</molecule>
    <text evidence="9">May be produced at very low levels due to a premature stop codon in the mRNA, leading to nonsense-mediated mRNA decay.</text>
</comment>
<comment type="miscellaneous">
    <molecule>Isoform 5</molecule>
    <text evidence="9">May be produced at very low levels due to a premature stop codon in the mRNA, leading to nonsense-mediated mRNA decay.</text>
</comment>
<comment type="miscellaneous">
    <molecule>Isoform 7</molecule>
    <text evidence="9">May be produced at very low levels due to a premature stop codon in the mRNA, leading to nonsense-mediated mRNA decay.</text>
</comment>
<evidence type="ECO:0000269" key="1">
    <source>
    </source>
</evidence>
<evidence type="ECO:0000269" key="2">
    <source>
    </source>
</evidence>
<evidence type="ECO:0000269" key="3">
    <source>
    </source>
</evidence>
<evidence type="ECO:0000269" key="4">
    <source>
    </source>
</evidence>
<evidence type="ECO:0000303" key="5">
    <source>
    </source>
</evidence>
<evidence type="ECO:0000303" key="6">
    <source>
    </source>
</evidence>
<evidence type="ECO:0000303" key="7">
    <source>
    </source>
</evidence>
<evidence type="ECO:0000303" key="8">
    <source>
    </source>
</evidence>
<evidence type="ECO:0000305" key="9"/>
<evidence type="ECO:0007744" key="10">
    <source>
    </source>
</evidence>
<name>RIP_HUMAN</name>
<gene>
    <name type="primary">RPAIN</name>
    <name type="synonym">RIP</name>
</gene>
<organism>
    <name type="scientific">Homo sapiens</name>
    <name type="common">Human</name>
    <dbReference type="NCBI Taxonomy" id="9606"/>
    <lineage>
        <taxon>Eukaryota</taxon>
        <taxon>Metazoa</taxon>
        <taxon>Chordata</taxon>
        <taxon>Craniata</taxon>
        <taxon>Vertebrata</taxon>
        <taxon>Euteleostomi</taxon>
        <taxon>Mammalia</taxon>
        <taxon>Eutheria</taxon>
        <taxon>Euarchontoglires</taxon>
        <taxon>Primates</taxon>
        <taxon>Haplorrhini</taxon>
        <taxon>Catarrhini</taxon>
        <taxon>Hominidae</taxon>
        <taxon>Homo</taxon>
    </lineage>
</organism>
<dbReference type="EMBL" id="AY775314">
    <property type="protein sequence ID" value="AAX14368.1"/>
    <property type="molecule type" value="mRNA"/>
</dbReference>
<dbReference type="EMBL" id="AY775315">
    <property type="protein sequence ID" value="AAX14369.1"/>
    <property type="molecule type" value="mRNA"/>
</dbReference>
<dbReference type="EMBL" id="AY775316">
    <property type="protein sequence ID" value="AAX14370.1"/>
    <property type="molecule type" value="mRNA"/>
</dbReference>
<dbReference type="EMBL" id="AY775317">
    <property type="protein sequence ID" value="AAX14371.1"/>
    <property type="molecule type" value="mRNA"/>
</dbReference>
<dbReference type="EMBL" id="AY775318">
    <property type="protein sequence ID" value="AAX14372.1"/>
    <property type="molecule type" value="mRNA"/>
</dbReference>
<dbReference type="EMBL" id="AY775319">
    <property type="protein sequence ID" value="AAX14373.1"/>
    <property type="molecule type" value="mRNA"/>
</dbReference>
<dbReference type="EMBL" id="AY775320">
    <property type="protein sequence ID" value="AAX14374.1"/>
    <property type="molecule type" value="mRNA"/>
</dbReference>
<dbReference type="EMBL" id="AY775321">
    <property type="protein sequence ID" value="AAX14375.1"/>
    <property type="molecule type" value="mRNA"/>
</dbReference>
<dbReference type="EMBL" id="AY775323">
    <property type="protein sequence ID" value="AAX14377.1"/>
    <property type="molecule type" value="mRNA"/>
</dbReference>
<dbReference type="EMBL" id="AY680654">
    <property type="protein sequence ID" value="AAT80872.1"/>
    <property type="molecule type" value="mRNA"/>
</dbReference>
<dbReference type="EMBL" id="AY680655">
    <property type="protein sequence ID" value="AAT80873.1"/>
    <property type="molecule type" value="mRNA"/>
</dbReference>
<dbReference type="EMBL" id="AY680656">
    <property type="protein sequence ID" value="AAT80874.1"/>
    <property type="molecule type" value="mRNA"/>
</dbReference>
<dbReference type="EMBL" id="AY680657">
    <property type="protein sequence ID" value="AAT80875.1"/>
    <property type="molecule type" value="mRNA"/>
</dbReference>
<dbReference type="EMBL" id="AY680658">
    <property type="protein sequence ID" value="AAT80876.1"/>
    <property type="molecule type" value="mRNA"/>
</dbReference>
<dbReference type="EMBL" id="AY680659">
    <property type="protein sequence ID" value="AAT80877.1"/>
    <property type="molecule type" value="mRNA"/>
</dbReference>
<dbReference type="EMBL" id="AY680660">
    <property type="protein sequence ID" value="AAT80878.1"/>
    <property type="molecule type" value="mRNA"/>
</dbReference>
<dbReference type="EMBL" id="AK295394">
    <property type="protein sequence ID" value="BAG58348.1"/>
    <property type="molecule type" value="mRNA"/>
</dbReference>
<dbReference type="EMBL" id="AK300409">
    <property type="protein sequence ID" value="BAG62139.1"/>
    <property type="molecule type" value="mRNA"/>
</dbReference>
<dbReference type="EMBL" id="CH471108">
    <property type="protein sequence ID" value="EAW90338.1"/>
    <property type="molecule type" value="Genomic_DNA"/>
</dbReference>
<dbReference type="EMBL" id="AC004148">
    <property type="status" value="NOT_ANNOTATED_CDS"/>
    <property type="molecule type" value="Genomic_DNA"/>
</dbReference>
<dbReference type="EMBL" id="BC004451">
    <property type="protein sequence ID" value="AAH04451.1"/>
    <property type="molecule type" value="mRNA"/>
</dbReference>
<dbReference type="EMBL" id="BC046349">
    <property type="protein sequence ID" value="AAH46349.1"/>
    <property type="molecule type" value="mRNA"/>
</dbReference>
<dbReference type="EMBL" id="BC051849">
    <property type="protein sequence ID" value="AAH51849.1"/>
    <property type="molecule type" value="mRNA"/>
</dbReference>
<dbReference type="CCDS" id="CCDS32536.1">
    <molecule id="Q86UA6-1"/>
</dbReference>
<dbReference type="CCDS" id="CCDS54075.1">
    <molecule id="Q86UA6-8"/>
</dbReference>
<dbReference type="CCDS" id="CCDS54076.1">
    <molecule id="Q86UA6-2"/>
</dbReference>
<dbReference type="CCDS" id="CCDS54077.1">
    <molecule id="Q86UA6-9"/>
</dbReference>
<dbReference type="CCDS" id="CCDS54079.1">
    <molecule id="Q86UA6-6"/>
</dbReference>
<dbReference type="RefSeq" id="NP_001028174.2">
    <molecule id="Q86UA6-1"/>
    <property type="nucleotide sequence ID" value="NM_001033002.4"/>
</dbReference>
<dbReference type="RefSeq" id="NP_001153715.1">
    <molecule id="Q86UA6-8"/>
    <property type="nucleotide sequence ID" value="NM_001160243.2"/>
</dbReference>
<dbReference type="RefSeq" id="NP_001153716.1">
    <molecule id="Q86UA6-2"/>
    <property type="nucleotide sequence ID" value="NM_001160244.2"/>
</dbReference>
<dbReference type="RefSeq" id="NP_001153718.1">
    <molecule id="Q86UA6-6"/>
    <property type="nucleotide sequence ID" value="NM_001160246.2"/>
</dbReference>
<dbReference type="RefSeq" id="NP_001153738.1">
    <molecule id="Q86UA6-9"/>
    <property type="nucleotide sequence ID" value="NM_001160266.2"/>
</dbReference>
<dbReference type="RefSeq" id="XP_047292883.1">
    <molecule id="Q86UA6-4"/>
    <property type="nucleotide sequence ID" value="XM_047436927.1"/>
</dbReference>
<dbReference type="RefSeq" id="XP_054173519.1">
    <molecule id="Q86UA6-4"/>
    <property type="nucleotide sequence ID" value="XM_054317544.1"/>
</dbReference>
<dbReference type="BioGRID" id="123995">
    <property type="interactions" value="22"/>
</dbReference>
<dbReference type="FunCoup" id="Q86UA6">
    <property type="interactions" value="3164"/>
</dbReference>
<dbReference type="IntAct" id="Q86UA6">
    <property type="interactions" value="13"/>
</dbReference>
<dbReference type="STRING" id="9606.ENSP00000385814"/>
<dbReference type="GlyGen" id="Q86UA6">
    <property type="glycosylation" value="1 site, 1 O-linked glycan (1 site)"/>
</dbReference>
<dbReference type="iPTMnet" id="Q86UA6"/>
<dbReference type="PhosphoSitePlus" id="Q86UA6"/>
<dbReference type="BioMuta" id="RPAIN"/>
<dbReference type="DMDM" id="74727468"/>
<dbReference type="jPOST" id="Q86UA6"/>
<dbReference type="MassIVE" id="Q86UA6"/>
<dbReference type="PaxDb" id="9606-ENSP00000385814"/>
<dbReference type="PeptideAtlas" id="Q86UA6"/>
<dbReference type="ProteomicsDB" id="19663"/>
<dbReference type="ProteomicsDB" id="19952"/>
<dbReference type="ProteomicsDB" id="69786">
    <molecule id="Q86UA6-1"/>
</dbReference>
<dbReference type="ProteomicsDB" id="69787">
    <molecule id="Q86UA6-2"/>
</dbReference>
<dbReference type="ProteomicsDB" id="69788">
    <molecule id="Q86UA6-3"/>
</dbReference>
<dbReference type="ProteomicsDB" id="69789">
    <molecule id="Q86UA6-4"/>
</dbReference>
<dbReference type="ProteomicsDB" id="69790">
    <molecule id="Q86UA6-5"/>
</dbReference>
<dbReference type="ProteomicsDB" id="69791">
    <molecule id="Q86UA6-6"/>
</dbReference>
<dbReference type="ProteomicsDB" id="69792">
    <molecule id="Q86UA6-7"/>
</dbReference>
<dbReference type="Pumba" id="Q86UA6"/>
<dbReference type="Antibodypedia" id="23662">
    <property type="antibodies" value="204 antibodies from 28 providers"/>
</dbReference>
<dbReference type="DNASU" id="84268"/>
<dbReference type="Ensembl" id="ENST00000327154.10">
    <molecule id="Q86UA6-9"/>
    <property type="protein sequence ID" value="ENSP00000315069.6"/>
    <property type="gene ID" value="ENSG00000129197.15"/>
</dbReference>
<dbReference type="Ensembl" id="ENST00000381208.9">
    <molecule id="Q86UA6-2"/>
    <property type="protein sequence ID" value="ENSP00000370605.5"/>
    <property type="gene ID" value="ENSG00000129197.15"/>
</dbReference>
<dbReference type="Ensembl" id="ENST00000381209.8">
    <molecule id="Q86UA6-1"/>
    <property type="protein sequence ID" value="ENSP00000370606.3"/>
    <property type="gene ID" value="ENSG00000129197.15"/>
</dbReference>
<dbReference type="Ensembl" id="ENST00000405578.8">
    <molecule id="Q86UA6-8"/>
    <property type="protein sequence ID" value="ENSP00000385814.4"/>
    <property type="gene ID" value="ENSG00000129197.15"/>
</dbReference>
<dbReference type="Ensembl" id="ENST00000536255.6">
    <molecule id="Q86UA6-6"/>
    <property type="protein sequence ID" value="ENSP00000439939.2"/>
    <property type="gene ID" value="ENSG00000129197.15"/>
</dbReference>
<dbReference type="Ensembl" id="ENST00000539417.6">
    <molecule id="Q86UA6-4"/>
    <property type="protein sequence ID" value="ENSP00000446453.2"/>
    <property type="gene ID" value="ENSG00000129197.15"/>
</dbReference>
<dbReference type="Ensembl" id="ENST00000571558.5">
    <molecule id="Q86UA6-7"/>
    <property type="protein sequence ID" value="ENSP00000458699.1"/>
    <property type="gene ID" value="ENSG00000129197.15"/>
</dbReference>
<dbReference type="Ensembl" id="ENST00000573577.5">
    <molecule id="Q86UA6-7"/>
    <property type="protein sequence ID" value="ENSP00000460162.1"/>
    <property type="gene ID" value="ENSG00000129197.15"/>
</dbReference>
<dbReference type="Ensembl" id="ENST00000574003.1">
    <molecule id="Q86UA6-5"/>
    <property type="protein sequence ID" value="ENSP00000467178.1"/>
    <property type="gene ID" value="ENSG00000129197.15"/>
</dbReference>
<dbReference type="Ensembl" id="ENST00000575112.5">
    <molecule id="Q86UA6-7"/>
    <property type="protein sequence ID" value="ENSP00000460354.1"/>
    <property type="gene ID" value="ENSG00000129197.15"/>
</dbReference>
<dbReference type="Ensembl" id="ENST00000575599.5">
    <molecule id="Q86UA6-5"/>
    <property type="protein sequence ID" value="ENSP00000458218.1"/>
    <property type="gene ID" value="ENSG00000129197.15"/>
</dbReference>
<dbReference type="GeneID" id="84268"/>
<dbReference type="KEGG" id="hsa:84268"/>
<dbReference type="MANE-Select" id="ENST00000381209.8">
    <property type="protein sequence ID" value="ENSP00000370606.3"/>
    <property type="RefSeq nucleotide sequence ID" value="NM_001033002.4"/>
    <property type="RefSeq protein sequence ID" value="NP_001028174.2"/>
</dbReference>
<dbReference type="UCSC" id="uc002gbw.3">
    <molecule id="Q86UA6-1"/>
    <property type="organism name" value="human"/>
</dbReference>
<dbReference type="AGR" id="HGNC:28641"/>
<dbReference type="CTD" id="84268"/>
<dbReference type="DisGeNET" id="84268"/>
<dbReference type="GeneCards" id="RPAIN"/>
<dbReference type="HGNC" id="HGNC:28641">
    <property type="gene designation" value="RPAIN"/>
</dbReference>
<dbReference type="HPA" id="ENSG00000129197">
    <property type="expression patterns" value="Low tissue specificity"/>
</dbReference>
<dbReference type="MIM" id="617299">
    <property type="type" value="gene"/>
</dbReference>
<dbReference type="neXtProt" id="NX_Q86UA6"/>
<dbReference type="OpenTargets" id="ENSG00000129197"/>
<dbReference type="PharmGKB" id="PA145007849"/>
<dbReference type="VEuPathDB" id="HostDB:ENSG00000129197"/>
<dbReference type="eggNOG" id="ENOG502R0QT">
    <property type="taxonomic scope" value="Eukaryota"/>
</dbReference>
<dbReference type="GeneTree" id="ENSGT00390000006416"/>
<dbReference type="InParanoid" id="Q86UA6"/>
<dbReference type="OMA" id="ACDSWTV"/>
<dbReference type="OrthoDB" id="435311at2759"/>
<dbReference type="PAN-GO" id="Q86UA6">
    <property type="GO annotations" value="3 GO annotations based on evolutionary models"/>
</dbReference>
<dbReference type="PhylomeDB" id="Q86UA6"/>
<dbReference type="TreeFam" id="TF326215"/>
<dbReference type="PathwayCommons" id="Q86UA6"/>
<dbReference type="SignaLink" id="Q86UA6"/>
<dbReference type="BioGRID-ORCS" id="84268">
    <property type="hits" value="573 hits in 1154 CRISPR screens"/>
</dbReference>
<dbReference type="ChiTaRS" id="RPAIN">
    <property type="organism name" value="human"/>
</dbReference>
<dbReference type="GeneWiki" id="RPAIN"/>
<dbReference type="GenomeRNAi" id="84268"/>
<dbReference type="Pharos" id="Q86UA6">
    <property type="development level" value="Tbio"/>
</dbReference>
<dbReference type="PRO" id="PR:Q86UA6"/>
<dbReference type="Proteomes" id="UP000005640">
    <property type="component" value="Chromosome 17"/>
</dbReference>
<dbReference type="RNAct" id="Q86UA6">
    <property type="molecule type" value="protein"/>
</dbReference>
<dbReference type="Bgee" id="ENSG00000129197">
    <property type="expression patterns" value="Expressed in cortical plate and 184 other cell types or tissues"/>
</dbReference>
<dbReference type="ExpressionAtlas" id="Q86UA6">
    <property type="expression patterns" value="baseline and differential"/>
</dbReference>
<dbReference type="GO" id="GO:0005737">
    <property type="term" value="C:cytoplasm"/>
    <property type="evidence" value="ECO:0000314"/>
    <property type="project" value="MGI"/>
</dbReference>
<dbReference type="GO" id="GO:0001650">
    <property type="term" value="C:fibrillar center"/>
    <property type="evidence" value="ECO:0000314"/>
    <property type="project" value="HPA"/>
</dbReference>
<dbReference type="GO" id="GO:0005654">
    <property type="term" value="C:nucleoplasm"/>
    <property type="evidence" value="ECO:0000314"/>
    <property type="project" value="HPA"/>
</dbReference>
<dbReference type="GO" id="GO:0005634">
    <property type="term" value="C:nucleus"/>
    <property type="evidence" value="ECO:0000318"/>
    <property type="project" value="GO_Central"/>
</dbReference>
<dbReference type="GO" id="GO:0016605">
    <property type="term" value="C:PML body"/>
    <property type="evidence" value="ECO:0000314"/>
    <property type="project" value="MGI"/>
</dbReference>
<dbReference type="GO" id="GO:0008270">
    <property type="term" value="F:zinc ion binding"/>
    <property type="evidence" value="ECO:0007669"/>
    <property type="project" value="UniProtKB-KW"/>
</dbReference>
<dbReference type="GO" id="GO:0006606">
    <property type="term" value="P:protein import into nucleus"/>
    <property type="evidence" value="ECO:0000314"/>
    <property type="project" value="MGI"/>
</dbReference>
<dbReference type="GO" id="GO:0009411">
    <property type="term" value="P:response to UV"/>
    <property type="evidence" value="ECO:0000314"/>
    <property type="project" value="MGI"/>
</dbReference>
<dbReference type="InterPro" id="IPR028156">
    <property type="entry name" value="RIP"/>
</dbReference>
<dbReference type="InterPro" id="IPR028159">
    <property type="entry name" value="RPA_interact_C_dom"/>
</dbReference>
<dbReference type="InterPro" id="IPR028155">
    <property type="entry name" value="RPA_interact_central"/>
</dbReference>
<dbReference type="InterPro" id="IPR028158">
    <property type="entry name" value="RPA_interact_N_dom"/>
</dbReference>
<dbReference type="PANTHER" id="PTHR31742:SF1">
    <property type="entry name" value="RPA-INTERACTING PROTEIN"/>
    <property type="match status" value="1"/>
</dbReference>
<dbReference type="PANTHER" id="PTHR31742">
    <property type="entry name" value="RPA-INTERACTING PROTEIN RPAIN"/>
    <property type="match status" value="1"/>
</dbReference>
<dbReference type="Pfam" id="PF14768">
    <property type="entry name" value="RPA_interact_C"/>
    <property type="match status" value="1"/>
</dbReference>
<dbReference type="Pfam" id="PF14767">
    <property type="entry name" value="RPA_interact_M"/>
    <property type="match status" value="1"/>
</dbReference>
<dbReference type="Pfam" id="PF14766">
    <property type="entry name" value="RPA_interact_N"/>
    <property type="match status" value="1"/>
</dbReference>
<accession>Q86UA6</accession>
<accession>A0A0B4J1T3</accession>
<accession>B4DI36</accession>
<accession>B4DTX7</accession>
<accession>E9PDG9</accession>
<accession>E9PES3</accession>
<accession>J3KNH8</accession>
<accession>Q4G2Y0</accession>
<accession>Q4G2Y5</accession>
<accession>Q4G2Y8</accession>
<accession>Q6B4V9</accession>
<accession>Q6B4W0</accession>
<accession>Q6B4W1</accession>
<accession>Q6B4W4</accession>
<accession>Q86X49</accession>
<accession>Q9BT00</accession>
<feature type="chain" id="PRO_0000076299" description="RPA-interacting protein">
    <location>
        <begin position="1"/>
        <end position="219"/>
    </location>
</feature>
<feature type="zinc finger region" description="RIP-type">
    <location>
        <begin position="137"/>
        <end position="212"/>
    </location>
</feature>
<feature type="region of interest" description="Mediates nuclear export">
    <location>
        <begin position="164"/>
        <end position="180"/>
    </location>
</feature>
<feature type="modified residue" description="Phosphoserine" evidence="10">
    <location>
        <position position="18"/>
    </location>
</feature>
<feature type="cross-link" description="Glycyl lysine isopeptide (Lys-Gly) (interchain with G-Cter in SUMO); in isoform 2" evidence="4">
    <location>
        <position position="121"/>
    </location>
</feature>
<feature type="splice variant" id="VSP_016402" description="In isoform 7." evidence="7 8">
    <original>EQS</original>
    <variation>GTT</variation>
    <location>
        <begin position="105"/>
        <end position="107"/>
    </location>
</feature>
<feature type="splice variant" id="VSP_016403" description="In isoform 5." evidence="7 8">
    <original>EQ</original>
    <variation>VF</variation>
    <location>
        <begin position="105"/>
        <end position="106"/>
    </location>
</feature>
<feature type="splice variant" id="VSP_016404" description="In isoform 6." evidence="6 7 8">
    <original>EQ</original>
    <variation>GL</variation>
    <location>
        <begin position="105"/>
        <end position="106"/>
    </location>
</feature>
<feature type="splice variant" id="VSP_016405" description="In isoform 5 and isoform 6." evidence="6 7 8">
    <location>
        <begin position="107"/>
        <end position="219"/>
    </location>
</feature>
<feature type="splice variant" id="VSP_016406" description="In isoform 7." evidence="7 8">
    <location>
        <begin position="108"/>
        <end position="219"/>
    </location>
</feature>
<feature type="splice variant" id="VSP_016407" description="In isoform 4." evidence="6 7 8">
    <original>KYNL</original>
    <variation>NLLS</variation>
    <location>
        <begin position="142"/>
        <end position="145"/>
    </location>
</feature>
<feature type="splice variant" id="VSP_016408" description="In isoform 3." evidence="5 7">
    <location>
        <begin position="143"/>
        <end position="219"/>
    </location>
</feature>
<feature type="splice variant" id="VSP_046795" description="In isoform 9." evidence="9">
    <original>YNLRITSGVVVCQCGLSIPSHSSELTEQKLRACLEGSINEHSAHCPHTPEFSVTGGTEEKSSLLMSCLACDTWAVIL</original>
    <variation>PVILGL</variation>
    <location>
        <begin position="143"/>
        <end position="219"/>
    </location>
</feature>
<feature type="splice variant" id="VSP_016409" description="In isoform 4." evidence="6 7 8">
    <location>
        <begin position="146"/>
        <end position="219"/>
    </location>
</feature>
<feature type="splice variant" id="VSP_016410" description="In isoform 2." evidence="7 8">
    <location>
        <begin position="164"/>
        <end position="210"/>
    </location>
</feature>
<feature type="splice variant" id="VSP_045356" description="In isoform 8." evidence="5">
    <original>ACDTWAVIL</original>
    <variation>VSVSWDPLCGKRDLWLVLFPP</variation>
    <location>
        <begin position="211"/>
        <end position="219"/>
    </location>
</feature>
<feature type="sequence variant" id="VAR_023947" description="Sumoylated and increases total protein sumoylation levels; dbSNP:rs12761." evidence="1 2 3 4">
    <original>N</original>
    <variation>K</variation>
    <location>
        <position position="103"/>
    </location>
</feature>
<feature type="mutagenesis site" description="Abolishes sumoylation; when associated with R-121 and R-142." evidence="4">
    <original>K</original>
    <variation>R</variation>
    <location>
        <position position="114"/>
    </location>
</feature>
<feature type="mutagenesis site" description="Induces a strong decrease in sumoylation; when associated with N-103. Abolishes sumoylation; when associated with R-114 and R-142." evidence="4">
    <original>K</original>
    <variation>R</variation>
    <location>
        <position position="121"/>
    </location>
</feature>
<feature type="mutagenesis site" description="Abolishes sumoylation; when associated with R-114 and R-121." evidence="4">
    <original>K</original>
    <variation>R</variation>
    <location>
        <position position="142"/>
    </location>
</feature>
<sequence>MAESLRSPRRSLYKLVGSPPWKEAFRQRCLERMRNSRDRLLNRYRQAGSSGPGNSQNSFLVQEVMEEEWNALQSVENCPEDLAQLEELIDMAVLEEIQQELINQEQSIISEYEKSLQFDEKCLSIMLAEWEANPLICPVCTKYNLRITSGVVVCQCGLSIPSHSSELTEQKLRACLEGSINEHSAHCPHTPEFSVTGGTEEKSSLLMSCLACDTWAVIL</sequence>